<comment type="catalytic activity">
    <reaction evidence="1">
        <text>L-histidinol phosphate + 2-oxoglutarate = 3-(imidazol-4-yl)-2-oxopropyl phosphate + L-glutamate</text>
        <dbReference type="Rhea" id="RHEA:23744"/>
        <dbReference type="ChEBI" id="CHEBI:16810"/>
        <dbReference type="ChEBI" id="CHEBI:29985"/>
        <dbReference type="ChEBI" id="CHEBI:57766"/>
        <dbReference type="ChEBI" id="CHEBI:57980"/>
        <dbReference type="EC" id="2.6.1.9"/>
    </reaction>
</comment>
<comment type="cofactor">
    <cofactor evidence="1">
        <name>pyridoxal 5'-phosphate</name>
        <dbReference type="ChEBI" id="CHEBI:597326"/>
    </cofactor>
</comment>
<comment type="pathway">
    <text evidence="1">Amino-acid biosynthesis; L-histidine biosynthesis; L-histidine from 5-phospho-alpha-D-ribose 1-diphosphate: step 7/9.</text>
</comment>
<comment type="subunit">
    <text evidence="1">Homodimer.</text>
</comment>
<comment type="similarity">
    <text evidence="1">Belongs to the class-II pyridoxal-phosphate-dependent aminotransferase family. Histidinol-phosphate aminotransferase subfamily.</text>
</comment>
<organism>
    <name type="scientific">Azorhizobium caulinodans (strain ATCC 43989 / DSM 5975 / JCM 20966 / LMG 6465 / NBRC 14845 / NCIMB 13405 / ORS 571)</name>
    <dbReference type="NCBI Taxonomy" id="438753"/>
    <lineage>
        <taxon>Bacteria</taxon>
        <taxon>Pseudomonadati</taxon>
        <taxon>Pseudomonadota</taxon>
        <taxon>Alphaproteobacteria</taxon>
        <taxon>Hyphomicrobiales</taxon>
        <taxon>Xanthobacteraceae</taxon>
        <taxon>Azorhizobium</taxon>
    </lineage>
</organism>
<sequence length="378" mass="40252">MSVSAKETQRHPARPEPRPGVLAISAYVPGKSHAAGVEKVFKLSSNETPLGPSPKAIAAFQSAGTNLQDYPDGSSTALREAIGKAMGIDPDRIICGAGSDEILNLIAHAYVGPGDEAIHCAHGFLVYKIATLGAGGVPVVVPDREDLQMDVDAIIGAVTERTRVIFLANPNNPTGTYLPFNEVRRLHAALPPNVLLVLDAAYSEYVRRNDYETGLELALSAENVIMCRTFSKIHGLAALRIGWAVASEAVIDALNRIRGPFNMNAPAIAAGAAAILDAEHVERSIAHNDQWLSWLTTELTALGLTVTPSVGNFVLIHFPKTPGRTAAEADAFLTRRGLILRAVASYGLPDSLRMTIGTEEANRLVVQALSDFLSGAER</sequence>
<evidence type="ECO:0000255" key="1">
    <source>
        <dbReference type="HAMAP-Rule" id="MF_01023"/>
    </source>
</evidence>
<evidence type="ECO:0000256" key="2">
    <source>
        <dbReference type="SAM" id="MobiDB-lite"/>
    </source>
</evidence>
<proteinExistence type="inferred from homology"/>
<feature type="chain" id="PRO_0000319743" description="Histidinol-phosphate aminotransferase">
    <location>
        <begin position="1"/>
        <end position="378"/>
    </location>
</feature>
<feature type="region of interest" description="Disordered" evidence="2">
    <location>
        <begin position="1"/>
        <end position="20"/>
    </location>
</feature>
<feature type="compositionally biased region" description="Basic and acidic residues" evidence="2">
    <location>
        <begin position="7"/>
        <end position="17"/>
    </location>
</feature>
<feature type="modified residue" description="N6-(pyridoxal phosphate)lysine" evidence="1">
    <location>
        <position position="232"/>
    </location>
</feature>
<reference key="1">
    <citation type="submission" date="2007-04" db="EMBL/GenBank/DDBJ databases">
        <title>Complete genome sequence of the nitrogen-fixing bacterium Azorhizobium caulinodans ORS571.</title>
        <authorList>
            <person name="Lee K.B."/>
            <person name="Backer P.D."/>
            <person name="Aono T."/>
            <person name="Liu C.T."/>
            <person name="Suzuki S."/>
            <person name="Suzuki T."/>
            <person name="Kaneko T."/>
            <person name="Yamada M."/>
            <person name="Tabata S."/>
            <person name="Kupfer D.M."/>
            <person name="Najar F.Z."/>
            <person name="Wiley G.B."/>
            <person name="Roe B."/>
            <person name="Binnewies T."/>
            <person name="Ussery D."/>
            <person name="Vereecke D."/>
            <person name="Gevers D."/>
            <person name="Holsters M."/>
            <person name="Oyaizu H."/>
        </authorList>
    </citation>
    <scope>NUCLEOTIDE SEQUENCE [LARGE SCALE GENOMIC DNA]</scope>
    <source>
        <strain>ATCC 43989 / DSM 5975 / JCM 20966 / LMG 6465 / NBRC 14845 / NCIMB 13405 / ORS 571</strain>
    </source>
</reference>
<gene>
    <name evidence="1" type="primary">hisC</name>
    <name type="ordered locus">AZC_4619</name>
</gene>
<name>HIS8_AZOC5</name>
<protein>
    <recommendedName>
        <fullName evidence="1">Histidinol-phosphate aminotransferase</fullName>
        <ecNumber evidence="1">2.6.1.9</ecNumber>
    </recommendedName>
    <alternativeName>
        <fullName evidence="1">Imidazole acetol-phosphate transaminase</fullName>
    </alternativeName>
</protein>
<keyword id="KW-0028">Amino-acid biosynthesis</keyword>
<keyword id="KW-0032">Aminotransferase</keyword>
<keyword id="KW-0368">Histidine biosynthesis</keyword>
<keyword id="KW-0663">Pyridoxal phosphate</keyword>
<keyword id="KW-1185">Reference proteome</keyword>
<keyword id="KW-0808">Transferase</keyword>
<accession>A8HZS2</accession>
<dbReference type="EC" id="2.6.1.9" evidence="1"/>
<dbReference type="EMBL" id="AP009384">
    <property type="protein sequence ID" value="BAF90617.1"/>
    <property type="molecule type" value="Genomic_DNA"/>
</dbReference>
<dbReference type="RefSeq" id="WP_012173138.1">
    <property type="nucleotide sequence ID" value="NC_009937.1"/>
</dbReference>
<dbReference type="SMR" id="A8HZS2"/>
<dbReference type="STRING" id="438753.AZC_4619"/>
<dbReference type="KEGG" id="azc:AZC_4619"/>
<dbReference type="eggNOG" id="COG0079">
    <property type="taxonomic scope" value="Bacteria"/>
</dbReference>
<dbReference type="HOGENOM" id="CLU_017584_3_3_5"/>
<dbReference type="UniPathway" id="UPA00031">
    <property type="reaction ID" value="UER00012"/>
</dbReference>
<dbReference type="Proteomes" id="UP000000270">
    <property type="component" value="Chromosome"/>
</dbReference>
<dbReference type="GO" id="GO:0004400">
    <property type="term" value="F:histidinol-phosphate transaminase activity"/>
    <property type="evidence" value="ECO:0007669"/>
    <property type="project" value="UniProtKB-UniRule"/>
</dbReference>
<dbReference type="GO" id="GO:0030170">
    <property type="term" value="F:pyridoxal phosphate binding"/>
    <property type="evidence" value="ECO:0007669"/>
    <property type="project" value="InterPro"/>
</dbReference>
<dbReference type="GO" id="GO:0000105">
    <property type="term" value="P:L-histidine biosynthetic process"/>
    <property type="evidence" value="ECO:0007669"/>
    <property type="project" value="UniProtKB-UniRule"/>
</dbReference>
<dbReference type="CDD" id="cd00609">
    <property type="entry name" value="AAT_like"/>
    <property type="match status" value="1"/>
</dbReference>
<dbReference type="Gene3D" id="3.90.1150.10">
    <property type="entry name" value="Aspartate Aminotransferase, domain 1"/>
    <property type="match status" value="1"/>
</dbReference>
<dbReference type="Gene3D" id="3.40.640.10">
    <property type="entry name" value="Type I PLP-dependent aspartate aminotransferase-like (Major domain)"/>
    <property type="match status" value="1"/>
</dbReference>
<dbReference type="HAMAP" id="MF_01023">
    <property type="entry name" value="HisC_aminotrans_2"/>
    <property type="match status" value="1"/>
</dbReference>
<dbReference type="InterPro" id="IPR004839">
    <property type="entry name" value="Aminotransferase_I/II_large"/>
</dbReference>
<dbReference type="InterPro" id="IPR005861">
    <property type="entry name" value="HisP_aminotrans"/>
</dbReference>
<dbReference type="InterPro" id="IPR050106">
    <property type="entry name" value="HistidinolP_aminotransfase"/>
</dbReference>
<dbReference type="InterPro" id="IPR015424">
    <property type="entry name" value="PyrdxlP-dep_Trfase"/>
</dbReference>
<dbReference type="InterPro" id="IPR015421">
    <property type="entry name" value="PyrdxlP-dep_Trfase_major"/>
</dbReference>
<dbReference type="InterPro" id="IPR015422">
    <property type="entry name" value="PyrdxlP-dep_Trfase_small"/>
</dbReference>
<dbReference type="NCBIfam" id="TIGR01141">
    <property type="entry name" value="hisC"/>
    <property type="match status" value="1"/>
</dbReference>
<dbReference type="PANTHER" id="PTHR43643:SF3">
    <property type="entry name" value="HISTIDINOL-PHOSPHATE AMINOTRANSFERASE"/>
    <property type="match status" value="1"/>
</dbReference>
<dbReference type="PANTHER" id="PTHR43643">
    <property type="entry name" value="HISTIDINOL-PHOSPHATE AMINOTRANSFERASE 2"/>
    <property type="match status" value="1"/>
</dbReference>
<dbReference type="Pfam" id="PF00155">
    <property type="entry name" value="Aminotran_1_2"/>
    <property type="match status" value="1"/>
</dbReference>
<dbReference type="SUPFAM" id="SSF53383">
    <property type="entry name" value="PLP-dependent transferases"/>
    <property type="match status" value="1"/>
</dbReference>